<protein>
    <recommendedName>
        <fullName evidence="1">Ribosome rescue factor SmrB</fullName>
        <ecNumber evidence="1">3.1.-.-</ecNumber>
    </recommendedName>
</protein>
<organism>
    <name type="scientific">Salmonella enteritidis PT4 (strain P125109)</name>
    <dbReference type="NCBI Taxonomy" id="550537"/>
    <lineage>
        <taxon>Bacteria</taxon>
        <taxon>Pseudomonadati</taxon>
        <taxon>Pseudomonadota</taxon>
        <taxon>Gammaproteobacteria</taxon>
        <taxon>Enterobacterales</taxon>
        <taxon>Enterobacteriaceae</taxon>
        <taxon>Salmonella</taxon>
    </lineage>
</organism>
<evidence type="ECO:0000255" key="1">
    <source>
        <dbReference type="HAMAP-Rule" id="MF_01042"/>
    </source>
</evidence>
<feature type="chain" id="PRO_1000136049" description="Ribosome rescue factor SmrB">
    <location>
        <begin position="1"/>
        <end position="183"/>
    </location>
</feature>
<feature type="domain" description="Smr" evidence="1">
    <location>
        <begin position="98"/>
        <end position="173"/>
    </location>
</feature>
<sequence>MKKKTSLSEEDQALFRQLMVGTRKIKQDTIVHRPLRKKITEVPTRRLIQEQADASHYFSDEFQPLLNTEGPVKYVREDVSHFELKKMRRGDYSPELFLDLHGLTQLQAKQELGALIAACRREHIFCACVMHGHGKHILKQQTPLWLAQHPHVMAFHQAPKEYGGDAALLVLIEVEEWQPPELP</sequence>
<name>SMRB_SALEP</name>
<proteinExistence type="inferred from homology"/>
<comment type="function">
    <text evidence="1">Acts as a ribosome collision sensor. Detects stalled/collided disomes (pairs of ribosomes where the leading ribosome is stalled and a second ribosome has collided with it) and endonucleolytically cleaves mRNA at the 5' boundary of the stalled ribosome. Stalled/collided disomes form a new interface (primarily via the 30S subunits) that binds SmrB. Cleaved mRNA becomes available for tmRNA ligation, leading to ribosomal subunit dissociation and rescue of stalled ribosomes.</text>
</comment>
<comment type="subunit">
    <text evidence="1">Associates with collided ribosomes, but not with correctly translating polysomes.</text>
</comment>
<comment type="similarity">
    <text evidence="1">Belongs to the SmrB family.</text>
</comment>
<dbReference type="EC" id="3.1.-.-" evidence="1"/>
<dbReference type="EMBL" id="AM933172">
    <property type="protein sequence ID" value="CAR33952.1"/>
    <property type="molecule type" value="Genomic_DNA"/>
</dbReference>
<dbReference type="RefSeq" id="WP_000730794.1">
    <property type="nucleotide sequence ID" value="NC_011294.1"/>
</dbReference>
<dbReference type="SMR" id="B5R3R7"/>
<dbReference type="KEGG" id="set:SEN2368"/>
<dbReference type="HOGENOM" id="CLU_055978_4_0_6"/>
<dbReference type="Proteomes" id="UP000000613">
    <property type="component" value="Chromosome"/>
</dbReference>
<dbReference type="GO" id="GO:0004521">
    <property type="term" value="F:RNA endonuclease activity"/>
    <property type="evidence" value="ECO:0007669"/>
    <property type="project" value="UniProtKB-UniRule"/>
</dbReference>
<dbReference type="GO" id="GO:0019843">
    <property type="term" value="F:rRNA binding"/>
    <property type="evidence" value="ECO:0007669"/>
    <property type="project" value="UniProtKB-UniRule"/>
</dbReference>
<dbReference type="GO" id="GO:0072344">
    <property type="term" value="P:rescue of stalled ribosome"/>
    <property type="evidence" value="ECO:0007669"/>
    <property type="project" value="UniProtKB-UniRule"/>
</dbReference>
<dbReference type="Gene3D" id="3.30.1370.110">
    <property type="match status" value="1"/>
</dbReference>
<dbReference type="HAMAP" id="MF_01042">
    <property type="entry name" value="SmrB"/>
    <property type="match status" value="1"/>
</dbReference>
<dbReference type="InterPro" id="IPR002625">
    <property type="entry name" value="Smr_dom"/>
</dbReference>
<dbReference type="InterPro" id="IPR036063">
    <property type="entry name" value="Smr_dom_sf"/>
</dbReference>
<dbReference type="InterPro" id="IPR022990">
    <property type="entry name" value="SmrB-like"/>
</dbReference>
<dbReference type="NCBIfam" id="NF003432">
    <property type="entry name" value="PRK04946.1"/>
    <property type="match status" value="1"/>
</dbReference>
<dbReference type="PANTHER" id="PTHR35562">
    <property type="entry name" value="DNA ENDONUCLEASE SMRA-RELATED"/>
    <property type="match status" value="1"/>
</dbReference>
<dbReference type="PANTHER" id="PTHR35562:SF1">
    <property type="entry name" value="UPF0115 PROTEIN YFCN"/>
    <property type="match status" value="1"/>
</dbReference>
<dbReference type="Pfam" id="PF01713">
    <property type="entry name" value="Smr"/>
    <property type="match status" value="1"/>
</dbReference>
<dbReference type="SMART" id="SM00463">
    <property type="entry name" value="SMR"/>
    <property type="match status" value="1"/>
</dbReference>
<dbReference type="SUPFAM" id="SSF160443">
    <property type="entry name" value="SMR domain-like"/>
    <property type="match status" value="1"/>
</dbReference>
<dbReference type="PROSITE" id="PS50828">
    <property type="entry name" value="SMR"/>
    <property type="match status" value="1"/>
</dbReference>
<reference key="1">
    <citation type="journal article" date="2008" name="Genome Res.">
        <title>Comparative genome analysis of Salmonella enteritidis PT4 and Salmonella gallinarum 287/91 provides insights into evolutionary and host adaptation pathways.</title>
        <authorList>
            <person name="Thomson N.R."/>
            <person name="Clayton D.J."/>
            <person name="Windhorst D."/>
            <person name="Vernikos G."/>
            <person name="Davidson S."/>
            <person name="Churcher C."/>
            <person name="Quail M.A."/>
            <person name="Stevens M."/>
            <person name="Jones M.A."/>
            <person name="Watson M."/>
            <person name="Barron A."/>
            <person name="Layton A."/>
            <person name="Pickard D."/>
            <person name="Kingsley R.A."/>
            <person name="Bignell A."/>
            <person name="Clark L."/>
            <person name="Harris B."/>
            <person name="Ormond D."/>
            <person name="Abdellah Z."/>
            <person name="Brooks K."/>
            <person name="Cherevach I."/>
            <person name="Chillingworth T."/>
            <person name="Woodward J."/>
            <person name="Norberczak H."/>
            <person name="Lord A."/>
            <person name="Arrowsmith C."/>
            <person name="Jagels K."/>
            <person name="Moule S."/>
            <person name="Mungall K."/>
            <person name="Saunders M."/>
            <person name="Whitehead S."/>
            <person name="Chabalgoity J.A."/>
            <person name="Maskell D."/>
            <person name="Humphreys T."/>
            <person name="Roberts M."/>
            <person name="Barrow P.A."/>
            <person name="Dougan G."/>
            <person name="Parkhill J."/>
        </authorList>
    </citation>
    <scope>NUCLEOTIDE SEQUENCE [LARGE SCALE GENOMIC DNA]</scope>
    <source>
        <strain>P125109</strain>
    </source>
</reference>
<keyword id="KW-0255">Endonuclease</keyword>
<keyword id="KW-0378">Hydrolase</keyword>
<keyword id="KW-0540">Nuclease</keyword>
<keyword id="KW-0694">RNA-binding</keyword>
<keyword id="KW-0699">rRNA-binding</keyword>
<gene>
    <name evidence="1" type="primary">smrB</name>
    <name type="ordered locus">SEN2368</name>
</gene>
<accession>B5R3R7</accession>